<evidence type="ECO:0000255" key="1"/>
<evidence type="ECO:0000255" key="2">
    <source>
        <dbReference type="PROSITE-ProRule" id="PRU00521"/>
    </source>
</evidence>
<evidence type="ECO:0000305" key="3">
    <source>
    </source>
</evidence>
<accession>Q49SQ3</accession>
<accession>Q49SQ4</accession>
<accession>Q49SQ5</accession>
<reference key="1">
    <citation type="journal article" date="2005" name="J. Biol. Chem.">
        <title>The rise and fall of the chemoattractant receptor GPR33.</title>
        <authorList>
            <person name="Roempler H."/>
            <person name="Schulz A."/>
            <person name="Pitra C."/>
            <person name="Coop G."/>
            <person name="Przeworski M."/>
            <person name="Paeaebo S."/>
            <person name="Schoeneberg T."/>
        </authorList>
    </citation>
    <scope>NUCLEOTIDE SEQUENCE [GENOMIC DNA]</scope>
</reference>
<comment type="function">
    <text>Orphan receptor; could be a chemoattractant receptor.</text>
</comment>
<comment type="subcellular location">
    <subcellularLocation>
        <location>Cell membrane</location>
        <topology>Multi-pass membrane protein</topology>
    </subcellularLocation>
</comment>
<comment type="polymorphism">
    <text evidence="3">In some individuals a nonsense mutation transforms either Ser-39 or Arg-140 into a premature stop codon. GPR33 has undergone independent pseudogenization in human, chimpanzee, orangutan and rat. This selective inactivation may be due to its interaction with a putative pathogen that could use GPR33 as a receptor for cell invasion.</text>
</comment>
<comment type="similarity">
    <text evidence="2">Belongs to the G-protein coupled receptor 1 family.</text>
</comment>
<name>GPR33_PANTR</name>
<dbReference type="EMBL" id="AY493991">
    <property type="protein sequence ID" value="AAR98750.1"/>
    <property type="molecule type" value="Genomic_DNA"/>
</dbReference>
<dbReference type="EMBL" id="AY493993">
    <property type="protein sequence ID" value="AAR98751.1"/>
    <property type="molecule type" value="Genomic_DNA"/>
</dbReference>
<dbReference type="EMBL" id="AY493995">
    <property type="protein sequence ID" value="AAR98752.1"/>
    <property type="molecule type" value="Genomic_DNA"/>
</dbReference>
<dbReference type="RefSeq" id="NP_001074257.2">
    <property type="nucleotide sequence ID" value="NM_001080788.2"/>
</dbReference>
<dbReference type="RefSeq" id="XP_009425731.1">
    <property type="nucleotide sequence ID" value="XM_009427456.2"/>
</dbReference>
<dbReference type="SMR" id="Q49SQ3"/>
<dbReference type="FunCoup" id="Q49SQ3">
    <property type="interactions" value="302"/>
</dbReference>
<dbReference type="STRING" id="9598.ENSPTRP00000054852"/>
<dbReference type="GlyCosmos" id="Q49SQ3">
    <property type="glycosylation" value="4 sites, No reported glycans"/>
</dbReference>
<dbReference type="PaxDb" id="9598-ENSPTRP00000054852"/>
<dbReference type="Ensembl" id="ENSPTRT00000062296.3">
    <property type="protein sequence ID" value="ENSPTRP00000054852.2"/>
    <property type="gene ID" value="ENSPTRG00000032557.3"/>
</dbReference>
<dbReference type="GeneID" id="746838"/>
<dbReference type="KEGG" id="ptr:746838"/>
<dbReference type="CTD" id="2856"/>
<dbReference type="VGNC" id="VGNC:7442">
    <property type="gene designation" value="GPR33"/>
</dbReference>
<dbReference type="eggNOG" id="KOG3656">
    <property type="taxonomic scope" value="Eukaryota"/>
</dbReference>
<dbReference type="GeneTree" id="ENSGT01020000230438"/>
<dbReference type="HOGENOM" id="CLU_009579_8_0_1"/>
<dbReference type="InParanoid" id="Q49SQ3"/>
<dbReference type="OMA" id="QHRTPRW"/>
<dbReference type="OrthoDB" id="12704at9604"/>
<dbReference type="TreeFam" id="TF330976"/>
<dbReference type="Proteomes" id="UP000002277">
    <property type="component" value="Chromosome 14"/>
</dbReference>
<dbReference type="GO" id="GO:0005886">
    <property type="term" value="C:plasma membrane"/>
    <property type="evidence" value="ECO:0000318"/>
    <property type="project" value="GO_Central"/>
</dbReference>
<dbReference type="GO" id="GO:0004875">
    <property type="term" value="F:complement receptor activity"/>
    <property type="evidence" value="ECO:0000318"/>
    <property type="project" value="GO_Central"/>
</dbReference>
<dbReference type="GO" id="GO:0004930">
    <property type="term" value="F:G protein-coupled receptor activity"/>
    <property type="evidence" value="ECO:0000318"/>
    <property type="project" value="GO_Central"/>
</dbReference>
<dbReference type="GO" id="GO:0002430">
    <property type="term" value="P:complement receptor mediated signaling pathway"/>
    <property type="evidence" value="ECO:0000318"/>
    <property type="project" value="GO_Central"/>
</dbReference>
<dbReference type="GO" id="GO:0006954">
    <property type="term" value="P:inflammatory response"/>
    <property type="evidence" value="ECO:0000318"/>
    <property type="project" value="GO_Central"/>
</dbReference>
<dbReference type="GO" id="GO:0007200">
    <property type="term" value="P:phospholipase C-activating G protein-coupled receptor signaling pathway"/>
    <property type="evidence" value="ECO:0000318"/>
    <property type="project" value="GO_Central"/>
</dbReference>
<dbReference type="GO" id="GO:0007204">
    <property type="term" value="P:positive regulation of cytosolic calcium ion concentration"/>
    <property type="evidence" value="ECO:0000318"/>
    <property type="project" value="GO_Central"/>
</dbReference>
<dbReference type="CDD" id="cd15120">
    <property type="entry name" value="7tmA_GPR33"/>
    <property type="match status" value="1"/>
</dbReference>
<dbReference type="FunFam" id="1.20.1070.10:FF:000034">
    <property type="entry name" value="G-protein coupled receptor 1"/>
    <property type="match status" value="1"/>
</dbReference>
<dbReference type="Gene3D" id="1.20.1070.10">
    <property type="entry name" value="Rhodopsin 7-helix transmembrane proteins"/>
    <property type="match status" value="1"/>
</dbReference>
<dbReference type="InterPro" id="IPR000826">
    <property type="entry name" value="Formyl_rcpt-rel"/>
</dbReference>
<dbReference type="InterPro" id="IPR000276">
    <property type="entry name" value="GPCR_Rhodpsn"/>
</dbReference>
<dbReference type="InterPro" id="IPR017452">
    <property type="entry name" value="GPCR_Rhodpsn_7TM"/>
</dbReference>
<dbReference type="PANTHER" id="PTHR24225">
    <property type="entry name" value="CHEMOTACTIC RECEPTOR"/>
    <property type="match status" value="1"/>
</dbReference>
<dbReference type="PANTHER" id="PTHR24225:SF5">
    <property type="entry name" value="G-PROTEIN COUPLED RECEPTOR 33-RELATED"/>
    <property type="match status" value="1"/>
</dbReference>
<dbReference type="Pfam" id="PF00001">
    <property type="entry name" value="7tm_1"/>
    <property type="match status" value="1"/>
</dbReference>
<dbReference type="PRINTS" id="PR00526">
    <property type="entry name" value="FMETLEUPHER"/>
</dbReference>
<dbReference type="PRINTS" id="PR00237">
    <property type="entry name" value="GPCRRHODOPSN"/>
</dbReference>
<dbReference type="SUPFAM" id="SSF81321">
    <property type="entry name" value="Family A G protein-coupled receptor-like"/>
    <property type="match status" value="1"/>
</dbReference>
<dbReference type="PROSITE" id="PS50262">
    <property type="entry name" value="G_PROTEIN_RECEP_F1_2"/>
    <property type="match status" value="1"/>
</dbReference>
<feature type="chain" id="PRO_0000069556" description="Probable G-protein coupled receptor 33">
    <location>
        <begin position="1"/>
        <end position="333"/>
    </location>
</feature>
<feature type="topological domain" description="Extracellular" evidence="1">
    <location>
        <begin position="1"/>
        <end position="30"/>
    </location>
</feature>
<feature type="transmembrane region" description="Helical; Name=1" evidence="1">
    <location>
        <begin position="31"/>
        <end position="53"/>
    </location>
</feature>
<feature type="topological domain" description="Cytoplasmic" evidence="1">
    <location>
        <begin position="54"/>
        <end position="64"/>
    </location>
</feature>
<feature type="transmembrane region" description="Helical; Name=2" evidence="1">
    <location>
        <begin position="65"/>
        <end position="86"/>
    </location>
</feature>
<feature type="topological domain" description="Extracellular" evidence="1">
    <location>
        <begin position="87"/>
        <end position="103"/>
    </location>
</feature>
<feature type="transmembrane region" description="Helical; Name=3" evidence="1">
    <location>
        <begin position="104"/>
        <end position="124"/>
    </location>
</feature>
<feature type="topological domain" description="Cytoplasmic" evidence="1">
    <location>
        <begin position="125"/>
        <end position="143"/>
    </location>
</feature>
<feature type="transmembrane region" description="Helical; Name=4" evidence="1">
    <location>
        <begin position="144"/>
        <end position="165"/>
    </location>
</feature>
<feature type="topological domain" description="Extracellular" evidence="1">
    <location>
        <begin position="166"/>
        <end position="209"/>
    </location>
</feature>
<feature type="transmembrane region" description="Helical; Name=5" evidence="1">
    <location>
        <begin position="210"/>
        <end position="230"/>
    </location>
</feature>
<feature type="topological domain" description="Cytoplasmic" evidence="1">
    <location>
        <begin position="231"/>
        <end position="246"/>
    </location>
</feature>
<feature type="transmembrane region" description="Helical; Name=6" evidence="1">
    <location>
        <begin position="247"/>
        <end position="268"/>
    </location>
</feature>
<feature type="topological domain" description="Extracellular" evidence="1">
    <location>
        <begin position="269"/>
        <end position="283"/>
    </location>
</feature>
<feature type="transmembrane region" description="Helical; Name=7" evidence="1">
    <location>
        <begin position="284"/>
        <end position="303"/>
    </location>
</feature>
<feature type="topological domain" description="Cytoplasmic" evidence="1">
    <location>
        <begin position="304"/>
        <end position="333"/>
    </location>
</feature>
<feature type="glycosylation site" description="N-linked (GlcNAc...) asparagine" evidence="1">
    <location>
        <position position="5"/>
    </location>
</feature>
<feature type="glycosylation site" description="N-linked (GlcNAc...) asparagine" evidence="1">
    <location>
        <position position="12"/>
    </location>
</feature>
<feature type="glycosylation site" description="N-linked (GlcNAc...) asparagine" evidence="1">
    <location>
        <position position="19"/>
    </location>
</feature>
<feature type="glycosylation site" description="N-linked (GlcNAc...) asparagine" evidence="1">
    <location>
        <position position="272"/>
    </location>
</feature>
<feature type="disulfide bond" evidence="2">
    <location>
        <begin position="101"/>
        <end position="179"/>
    </location>
</feature>
<protein>
    <recommendedName>
        <fullName>Probable G-protein coupled receptor 33</fullName>
    </recommendedName>
</protein>
<proteinExistence type="inferred from homology"/>
<keyword id="KW-1003">Cell membrane</keyword>
<keyword id="KW-1015">Disulfide bond</keyword>
<keyword id="KW-0297">G-protein coupled receptor</keyword>
<keyword id="KW-0325">Glycoprotein</keyword>
<keyword id="KW-0472">Membrane</keyword>
<keyword id="KW-0675">Receptor</keyword>
<keyword id="KW-1185">Reference proteome</keyword>
<keyword id="KW-0807">Transducer</keyword>
<keyword id="KW-0812">Transmembrane</keyword>
<keyword id="KW-1133">Transmembrane helix</keyword>
<gene>
    <name type="primary">GPR33</name>
</gene>
<sequence length="333" mass="38257">MDLINSTDYLINASTLVRNSTQFLAPASKMIIALSLYISSIIGTITNGLYLWVLRFKMKQTVNTLLFFHLILSYFISTMILPFMATSQLQDNHWNFGTALCKVFNGTLSLGMFTSVFFLSAIGLDRYLLTLHPVWSQQHRTPRWASSIVLGVWISAAALSIPYLIFRQTHHDRKGKVTCQNNYAVSTNWESKEMQALRQWIHVACFISRFLLGFLLPFFIIIFCYERVASKVKERSLFKSSKPFKVMMTAIISFFVCWMPYHIHQGLLLTTNQSLLLELTLILTVLTTSFNTIFSPTLYLFVGENFKKVFKKSILALFESTFSEDSSVERTQT</sequence>
<organism>
    <name type="scientific">Pan troglodytes</name>
    <name type="common">Chimpanzee</name>
    <dbReference type="NCBI Taxonomy" id="9598"/>
    <lineage>
        <taxon>Eukaryota</taxon>
        <taxon>Metazoa</taxon>
        <taxon>Chordata</taxon>
        <taxon>Craniata</taxon>
        <taxon>Vertebrata</taxon>
        <taxon>Euteleostomi</taxon>
        <taxon>Mammalia</taxon>
        <taxon>Eutheria</taxon>
        <taxon>Euarchontoglires</taxon>
        <taxon>Primates</taxon>
        <taxon>Haplorrhini</taxon>
        <taxon>Catarrhini</taxon>
        <taxon>Hominidae</taxon>
        <taxon>Pan</taxon>
    </lineage>
</organism>